<feature type="chain" id="PRO_0000204734" description="Aminoacyltransferase FemA">
    <location>
        <begin position="1"/>
        <end position="420"/>
    </location>
</feature>
<comment type="function">
    <text evidence="1">Catalyzes the formation of the pentaglycine interpeptide bridge, which is characteristic of the S.aureus peptidoglycan. Adds glycines 2 and 3 of the pentaglycine bridge, using glycyl-tRNA(Gly) as donor. Involved in resistance to methicillin (By similarity).</text>
</comment>
<comment type="catalytic activity">
    <reaction>
        <text>beta-D-GlcNAc-(1-&gt;4)-Mur2Ac(oyl-L-Ala-D-isoglutaminyl-L-Lys-(N(6)-Gly)-D-Ala-D-Ala)-di-trans,octa-cis-undecaprenyl diphosphate + 2 glycyl-tRNA(Gly) = MurNAc-L-Ala-D-isoglutaminyl-L-Lys-(N(6)-tri-Gly)-D-Ala-D-Ala-diphospho-di-trans,octa-cis-undecaprenyl-GlcNAc + 2 tRNA(Gly) + 2 H(+)</text>
        <dbReference type="Rhea" id="RHEA:30439"/>
        <dbReference type="Rhea" id="RHEA-COMP:9664"/>
        <dbReference type="Rhea" id="RHEA-COMP:9683"/>
        <dbReference type="ChEBI" id="CHEBI:15378"/>
        <dbReference type="ChEBI" id="CHEBI:62234"/>
        <dbReference type="ChEBI" id="CHEBI:62235"/>
        <dbReference type="ChEBI" id="CHEBI:78442"/>
        <dbReference type="ChEBI" id="CHEBI:78522"/>
        <dbReference type="EC" id="2.3.2.17"/>
    </reaction>
</comment>
<comment type="subunit">
    <text evidence="1">Homodimer. Interacts with FemB (By similarity).</text>
</comment>
<comment type="subcellular location">
    <subcellularLocation>
        <location evidence="2">Cytoplasm</location>
    </subcellularLocation>
</comment>
<comment type="similarity">
    <text evidence="3">Belongs to the FemABX family.</text>
</comment>
<comment type="sequence caution" evidence="3">
    <conflict type="erroneous initiation">
        <sequence resource="EMBL-CDS" id="AAW38155"/>
    </conflict>
</comment>
<sequence length="420" mass="49124">MKFTNLTAKEFGAFTDSMPYSHFTQTVGHYELKLAEGYETHLVGIKNNNNEVIAACLLTAVPVMKVFKYFYSNRGPVIDYENQELVHFFFNELSKYVKKHRCLYLHIDPYLPYQYLNHDGEITGNAGNDWFFDKMSNLGFEHTGFHKGFDPVLQIRYHSVLDLKDKTADDIIKNMDGLRKRNTKKVKKNGVKVRFLSEEELPIFRSFMEDTSESKAFADRDDKFYYNRLKYYKDRVLVPLAYINFDEYIKELNEERDILNKDLNKALKDIEKRPENKKAHNKRDNLQQQLDANEQKIEEGKRLQEEHGNELPISAGFFFINPFEVVYYAGGTSNAFRHFAGSYAVQWEMINYALNHGIDRYNFYGVSGKFTEDAEDAGVVKFKKGYNAEIIEYVGDFIKPINKPVYAAYTALKKVKDRIF</sequence>
<dbReference type="EC" id="2.3.2.17"/>
<dbReference type="EMBL" id="CP000046">
    <property type="protein sequence ID" value="AAW38155.1"/>
    <property type="status" value="ALT_INIT"/>
    <property type="molecule type" value="Genomic_DNA"/>
</dbReference>
<dbReference type="RefSeq" id="WP_000673309.1">
    <property type="nucleotide sequence ID" value="NZ_JBGOFO010000003.1"/>
</dbReference>
<dbReference type="SMR" id="Q5HG45"/>
<dbReference type="KEGG" id="sac:SACOL1410"/>
<dbReference type="HOGENOM" id="CLU_048411_1_0_9"/>
<dbReference type="Proteomes" id="UP000000530">
    <property type="component" value="Chromosome"/>
</dbReference>
<dbReference type="GO" id="GO:0005737">
    <property type="term" value="C:cytoplasm"/>
    <property type="evidence" value="ECO:0007669"/>
    <property type="project" value="UniProtKB-SubCell"/>
</dbReference>
<dbReference type="GO" id="GO:0016755">
    <property type="term" value="F:aminoacyltransferase activity"/>
    <property type="evidence" value="ECO:0007669"/>
    <property type="project" value="InterPro"/>
</dbReference>
<dbReference type="GO" id="GO:0000166">
    <property type="term" value="F:nucleotide binding"/>
    <property type="evidence" value="ECO:0007669"/>
    <property type="project" value="InterPro"/>
</dbReference>
<dbReference type="GO" id="GO:0071555">
    <property type="term" value="P:cell wall organization"/>
    <property type="evidence" value="ECO:0007669"/>
    <property type="project" value="UniProtKB-KW"/>
</dbReference>
<dbReference type="GO" id="GO:0009252">
    <property type="term" value="P:peptidoglycan biosynthetic process"/>
    <property type="evidence" value="ECO:0007669"/>
    <property type="project" value="UniProtKB-KW"/>
</dbReference>
<dbReference type="GO" id="GO:0008360">
    <property type="term" value="P:regulation of cell shape"/>
    <property type="evidence" value="ECO:0007669"/>
    <property type="project" value="UniProtKB-KW"/>
</dbReference>
<dbReference type="GO" id="GO:0046677">
    <property type="term" value="P:response to antibiotic"/>
    <property type="evidence" value="ECO:0007669"/>
    <property type="project" value="UniProtKB-KW"/>
</dbReference>
<dbReference type="Gene3D" id="1.20.58.90">
    <property type="match status" value="1"/>
</dbReference>
<dbReference type="Gene3D" id="3.40.630.30">
    <property type="match status" value="2"/>
</dbReference>
<dbReference type="InterPro" id="IPR016181">
    <property type="entry name" value="Acyl_CoA_acyltransferase"/>
</dbReference>
<dbReference type="InterPro" id="IPR003447">
    <property type="entry name" value="FEMABX"/>
</dbReference>
<dbReference type="InterPro" id="IPR050644">
    <property type="entry name" value="PG_Glycine_Bridge_Synth"/>
</dbReference>
<dbReference type="InterPro" id="IPR010978">
    <property type="entry name" value="tRNA-bd_arm"/>
</dbReference>
<dbReference type="PANTHER" id="PTHR36174:SF2">
    <property type="entry name" value="AMINOACYLTRANSFERASE FEMA"/>
    <property type="match status" value="1"/>
</dbReference>
<dbReference type="PANTHER" id="PTHR36174">
    <property type="entry name" value="LIPID II:GLYCINE GLYCYLTRANSFERASE"/>
    <property type="match status" value="1"/>
</dbReference>
<dbReference type="Pfam" id="PF02388">
    <property type="entry name" value="FemAB"/>
    <property type="match status" value="1"/>
</dbReference>
<dbReference type="SUPFAM" id="SSF55729">
    <property type="entry name" value="Acyl-CoA N-acyltransferases (Nat)"/>
    <property type="match status" value="2"/>
</dbReference>
<dbReference type="SUPFAM" id="SSF46589">
    <property type="entry name" value="tRNA-binding arm"/>
    <property type="match status" value="1"/>
</dbReference>
<dbReference type="PROSITE" id="PS51191">
    <property type="entry name" value="FEMABX"/>
    <property type="match status" value="1"/>
</dbReference>
<gene>
    <name type="primary">femA</name>
    <name type="ordered locus">SACOL1410</name>
</gene>
<accession>Q5HG45</accession>
<reference key="1">
    <citation type="journal article" date="2005" name="J. Bacteriol.">
        <title>Insights on evolution of virulence and resistance from the complete genome analysis of an early methicillin-resistant Staphylococcus aureus strain and a biofilm-producing methicillin-resistant Staphylococcus epidermidis strain.</title>
        <authorList>
            <person name="Gill S.R."/>
            <person name="Fouts D.E."/>
            <person name="Archer G.L."/>
            <person name="Mongodin E.F."/>
            <person name="DeBoy R.T."/>
            <person name="Ravel J."/>
            <person name="Paulsen I.T."/>
            <person name="Kolonay J.F."/>
            <person name="Brinkac L.M."/>
            <person name="Beanan M.J."/>
            <person name="Dodson R.J."/>
            <person name="Daugherty S.C."/>
            <person name="Madupu R."/>
            <person name="Angiuoli S.V."/>
            <person name="Durkin A.S."/>
            <person name="Haft D.H."/>
            <person name="Vamathevan J.J."/>
            <person name="Khouri H."/>
            <person name="Utterback T.R."/>
            <person name="Lee C."/>
            <person name="Dimitrov G."/>
            <person name="Jiang L."/>
            <person name="Qin H."/>
            <person name="Weidman J."/>
            <person name="Tran K."/>
            <person name="Kang K.H."/>
            <person name="Hance I.R."/>
            <person name="Nelson K.E."/>
            <person name="Fraser C.M."/>
        </authorList>
    </citation>
    <scope>NUCLEOTIDE SEQUENCE [LARGE SCALE GENOMIC DNA]</scope>
    <source>
        <strain>COL</strain>
    </source>
</reference>
<reference key="2">
    <citation type="journal article" date="1995" name="FEMS Microbiol. Lett.">
        <title>FemA of Staphylococcus aureus: isolation and immunodetection.</title>
        <authorList>
            <person name="Johnson S."/>
            <person name="Krueger D."/>
            <person name="Labischinski H."/>
        </authorList>
    </citation>
    <scope>SUBCELLULAR LOCATION</scope>
</reference>
<organism>
    <name type="scientific">Staphylococcus aureus (strain COL)</name>
    <dbReference type="NCBI Taxonomy" id="93062"/>
    <lineage>
        <taxon>Bacteria</taxon>
        <taxon>Bacillati</taxon>
        <taxon>Bacillota</taxon>
        <taxon>Bacilli</taxon>
        <taxon>Bacillales</taxon>
        <taxon>Staphylococcaceae</taxon>
        <taxon>Staphylococcus</taxon>
    </lineage>
</organism>
<evidence type="ECO:0000250" key="1"/>
<evidence type="ECO:0000269" key="2">
    <source>
    </source>
</evidence>
<evidence type="ECO:0000305" key="3"/>
<keyword id="KW-0012">Acyltransferase</keyword>
<keyword id="KW-0046">Antibiotic resistance</keyword>
<keyword id="KW-0133">Cell shape</keyword>
<keyword id="KW-0961">Cell wall biogenesis/degradation</keyword>
<keyword id="KW-0963">Cytoplasm</keyword>
<keyword id="KW-0573">Peptidoglycan synthesis</keyword>
<keyword id="KW-0808">Transferase</keyword>
<protein>
    <recommendedName>
        <fullName>Aminoacyltransferase FemA</fullName>
        <ecNumber>2.3.2.17</ecNumber>
    </recommendedName>
    <alternativeName>
        <fullName>Factor essential for expression of methicillin resistance A</fullName>
    </alternativeName>
    <alternativeName>
        <fullName>N-acetylmuramoyl-L-alanyl-D-glutamyl-L-lysyl-(N6-glycyl)-D-alanyl-D-alanine-diphosphoundecaprenyl-N-acetylglucosamine:glycine glycyltransferase</fullName>
    </alternativeName>
</protein>
<proteinExistence type="inferred from homology"/>
<name>FEMA_STAAC</name>